<protein>
    <recommendedName>
        <fullName evidence="1">Large ribosomal subunit protein uL18</fullName>
    </recommendedName>
    <alternativeName>
        <fullName evidence="2">50S ribosomal protein L18</fullName>
    </alternativeName>
</protein>
<dbReference type="EMBL" id="CU928158">
    <property type="protein sequence ID" value="CAQ90767.1"/>
    <property type="molecule type" value="Genomic_DNA"/>
</dbReference>
<dbReference type="RefSeq" id="WP_000358960.1">
    <property type="nucleotide sequence ID" value="NC_011740.1"/>
</dbReference>
<dbReference type="SMR" id="B7LRS0"/>
<dbReference type="GeneID" id="98390426"/>
<dbReference type="KEGG" id="efe:EFER_3287"/>
<dbReference type="HOGENOM" id="CLU_098841_0_1_6"/>
<dbReference type="OrthoDB" id="9810939at2"/>
<dbReference type="Proteomes" id="UP000000745">
    <property type="component" value="Chromosome"/>
</dbReference>
<dbReference type="GO" id="GO:0022625">
    <property type="term" value="C:cytosolic large ribosomal subunit"/>
    <property type="evidence" value="ECO:0007669"/>
    <property type="project" value="TreeGrafter"/>
</dbReference>
<dbReference type="GO" id="GO:0008097">
    <property type="term" value="F:5S rRNA binding"/>
    <property type="evidence" value="ECO:0007669"/>
    <property type="project" value="TreeGrafter"/>
</dbReference>
<dbReference type="GO" id="GO:0003735">
    <property type="term" value="F:structural constituent of ribosome"/>
    <property type="evidence" value="ECO:0007669"/>
    <property type="project" value="InterPro"/>
</dbReference>
<dbReference type="GO" id="GO:0006412">
    <property type="term" value="P:translation"/>
    <property type="evidence" value="ECO:0007669"/>
    <property type="project" value="UniProtKB-UniRule"/>
</dbReference>
<dbReference type="CDD" id="cd00432">
    <property type="entry name" value="Ribosomal_L18_L5e"/>
    <property type="match status" value="1"/>
</dbReference>
<dbReference type="FunFam" id="3.30.420.100:FF:000001">
    <property type="entry name" value="50S ribosomal protein L18"/>
    <property type="match status" value="1"/>
</dbReference>
<dbReference type="Gene3D" id="3.30.420.100">
    <property type="match status" value="1"/>
</dbReference>
<dbReference type="HAMAP" id="MF_01337_B">
    <property type="entry name" value="Ribosomal_uL18_B"/>
    <property type="match status" value="1"/>
</dbReference>
<dbReference type="InterPro" id="IPR004389">
    <property type="entry name" value="Ribosomal_uL18_bac-type"/>
</dbReference>
<dbReference type="InterPro" id="IPR005484">
    <property type="entry name" value="Ribosomal_uL18_bac/euk"/>
</dbReference>
<dbReference type="NCBIfam" id="TIGR00060">
    <property type="entry name" value="L18_bact"/>
    <property type="match status" value="1"/>
</dbReference>
<dbReference type="PANTHER" id="PTHR12899">
    <property type="entry name" value="39S RIBOSOMAL PROTEIN L18, MITOCHONDRIAL"/>
    <property type="match status" value="1"/>
</dbReference>
<dbReference type="PANTHER" id="PTHR12899:SF3">
    <property type="entry name" value="LARGE RIBOSOMAL SUBUNIT PROTEIN UL18M"/>
    <property type="match status" value="1"/>
</dbReference>
<dbReference type="Pfam" id="PF00861">
    <property type="entry name" value="Ribosomal_L18p"/>
    <property type="match status" value="1"/>
</dbReference>
<dbReference type="SUPFAM" id="SSF53137">
    <property type="entry name" value="Translational machinery components"/>
    <property type="match status" value="1"/>
</dbReference>
<feature type="chain" id="PRO_1000142665" description="Large ribosomal subunit protein uL18">
    <location>
        <begin position="1"/>
        <end position="117"/>
    </location>
</feature>
<name>RL18_ESCF3</name>
<comment type="function">
    <text evidence="1">This is one of the proteins that bind and probably mediate the attachment of the 5S RNA into the large ribosomal subunit, where it forms part of the central protuberance.</text>
</comment>
<comment type="subunit">
    <text evidence="1">Part of the 50S ribosomal subunit; part of the 5S rRNA/L5/L18/L25 subcomplex. Contacts the 5S and 23S rRNAs.</text>
</comment>
<comment type="similarity">
    <text evidence="1">Belongs to the universal ribosomal protein uL18 family.</text>
</comment>
<keyword id="KW-0687">Ribonucleoprotein</keyword>
<keyword id="KW-0689">Ribosomal protein</keyword>
<keyword id="KW-0694">RNA-binding</keyword>
<keyword id="KW-0699">rRNA-binding</keyword>
<sequence>MDKKSARIRRATRARRKLQELGATRLVVHRTPRHIYAQVIAPNGSEVLVAASTVEKAIAEQLKYTGNKDAAAAVGKAVAERALEKGIKDVSFDRSGFQYHGRVQALADAAREAGLQF</sequence>
<proteinExistence type="inferred from homology"/>
<accession>B7LRS0</accession>
<reference key="1">
    <citation type="journal article" date="2009" name="PLoS Genet.">
        <title>Organised genome dynamics in the Escherichia coli species results in highly diverse adaptive paths.</title>
        <authorList>
            <person name="Touchon M."/>
            <person name="Hoede C."/>
            <person name="Tenaillon O."/>
            <person name="Barbe V."/>
            <person name="Baeriswyl S."/>
            <person name="Bidet P."/>
            <person name="Bingen E."/>
            <person name="Bonacorsi S."/>
            <person name="Bouchier C."/>
            <person name="Bouvet O."/>
            <person name="Calteau A."/>
            <person name="Chiapello H."/>
            <person name="Clermont O."/>
            <person name="Cruveiller S."/>
            <person name="Danchin A."/>
            <person name="Diard M."/>
            <person name="Dossat C."/>
            <person name="Karoui M.E."/>
            <person name="Frapy E."/>
            <person name="Garry L."/>
            <person name="Ghigo J.M."/>
            <person name="Gilles A.M."/>
            <person name="Johnson J."/>
            <person name="Le Bouguenec C."/>
            <person name="Lescat M."/>
            <person name="Mangenot S."/>
            <person name="Martinez-Jehanne V."/>
            <person name="Matic I."/>
            <person name="Nassif X."/>
            <person name="Oztas S."/>
            <person name="Petit M.A."/>
            <person name="Pichon C."/>
            <person name="Rouy Z."/>
            <person name="Ruf C.S."/>
            <person name="Schneider D."/>
            <person name="Tourret J."/>
            <person name="Vacherie B."/>
            <person name="Vallenet D."/>
            <person name="Medigue C."/>
            <person name="Rocha E.P.C."/>
            <person name="Denamur E."/>
        </authorList>
    </citation>
    <scope>NUCLEOTIDE SEQUENCE [LARGE SCALE GENOMIC DNA]</scope>
    <source>
        <strain>ATCC 35469 / DSM 13698 / BCRC 15582 / CCUG 18766 / IAM 14443 / JCM 21226 / LMG 7866 / NBRC 102419 / NCTC 12128 / CDC 0568-73</strain>
    </source>
</reference>
<organism>
    <name type="scientific">Escherichia fergusonii (strain ATCC 35469 / DSM 13698 / CCUG 18766 / IAM 14443 / JCM 21226 / LMG 7866 / NBRC 102419 / NCTC 12128 / CDC 0568-73)</name>
    <dbReference type="NCBI Taxonomy" id="585054"/>
    <lineage>
        <taxon>Bacteria</taxon>
        <taxon>Pseudomonadati</taxon>
        <taxon>Pseudomonadota</taxon>
        <taxon>Gammaproteobacteria</taxon>
        <taxon>Enterobacterales</taxon>
        <taxon>Enterobacteriaceae</taxon>
        <taxon>Escherichia</taxon>
    </lineage>
</organism>
<evidence type="ECO:0000255" key="1">
    <source>
        <dbReference type="HAMAP-Rule" id="MF_01337"/>
    </source>
</evidence>
<evidence type="ECO:0000305" key="2"/>
<gene>
    <name evidence="1" type="primary">rplR</name>
    <name type="ordered locus">EFER_3287</name>
</gene>